<sequence>MSQLDVLILDDEESIRNLIAANLKDEGFNPKVAANSTQALKIISEKPVSAVILDIWLQGSEIDGLGVLEIIKKRYPLIPVIIISGHGTIETAVNAIKMGAYDYIEKPFNNDKLIILLKRACEVTKLKRENIDLKSKVIDKTELVGGCSVTLKYKMEIEKAASSSSRIMIHGKVGSGKELAARLIHKQSKRVNNPFIIFSPTCMTTEKINQELFGESEKQENNNKRPTILEFANNGTLYIDEVSNIPIPIQVKLLKFLKDQTITKPCGKKTKVDIKIITSTSKNIQDEVNNGKFLEDLYYRLNVFSLKVPSLYERKEDIPLLVKYFVKQLSKFSGLKERHFSDEAITALQSYEWPGNIRQLRNVVEWTLIMNPLTTGNNEIIKPYMIPSEILANSANLTKLEDSFDMLSMPLREAREVFERQYLSAQMSRFNNNISKTSSFVGMERSALHRKLKLLSLHIPPTNKINEEEYEKANA</sequence>
<keyword id="KW-0067">ATP-binding</keyword>
<keyword id="KW-0547">Nucleotide-binding</keyword>
<keyword id="KW-0597">Phosphoprotein</keyword>
<keyword id="KW-0804">Transcription</keyword>
<keyword id="KW-0805">Transcription regulation</keyword>
<keyword id="KW-0902">Two-component regulatory system</keyword>
<name>NTRXL_RICTY</name>
<evidence type="ECO:0000250" key="1"/>
<evidence type="ECO:0000255" key="2">
    <source>
        <dbReference type="PROSITE-ProRule" id="PRU00169"/>
    </source>
</evidence>
<evidence type="ECO:0000255" key="3">
    <source>
        <dbReference type="PROSITE-ProRule" id="PRU00193"/>
    </source>
</evidence>
<comment type="function">
    <text evidence="1">Member of the two-component regulatory system RT0550/RT0603.</text>
</comment>
<proteinExistence type="inferred from homology"/>
<reference key="1">
    <citation type="journal article" date="2004" name="J. Bacteriol.">
        <title>Complete genome sequence of Rickettsia typhi and comparison with sequences of other Rickettsiae.</title>
        <authorList>
            <person name="McLeod M.P."/>
            <person name="Qin X."/>
            <person name="Karpathy S.E."/>
            <person name="Gioia J."/>
            <person name="Highlander S.K."/>
            <person name="Fox G.E."/>
            <person name="McNeill T.Z."/>
            <person name="Jiang H."/>
            <person name="Muzny D."/>
            <person name="Jacob L.S."/>
            <person name="Hawes A.C."/>
            <person name="Sodergren E."/>
            <person name="Gill R."/>
            <person name="Hume J."/>
            <person name="Morgan M."/>
            <person name="Fan G."/>
            <person name="Amin A.G."/>
            <person name="Gibbs R.A."/>
            <person name="Hong C."/>
            <person name="Yu X.-J."/>
            <person name="Walker D.H."/>
            <person name="Weinstock G.M."/>
        </authorList>
    </citation>
    <scope>NUCLEOTIDE SEQUENCE [LARGE SCALE GENOMIC DNA]</scope>
    <source>
        <strain>ATCC VR-144 / Wilmington</strain>
    </source>
</reference>
<gene>
    <name type="ordered locus">RT0550</name>
</gene>
<dbReference type="EMBL" id="AE017197">
    <property type="protein sequence ID" value="AAU04018.1"/>
    <property type="molecule type" value="Genomic_DNA"/>
</dbReference>
<dbReference type="RefSeq" id="WP_011190999.1">
    <property type="nucleotide sequence ID" value="NC_006142.1"/>
</dbReference>
<dbReference type="SMR" id="Q68WH4"/>
<dbReference type="KEGG" id="rty:RT0550"/>
<dbReference type="eggNOG" id="COG2204">
    <property type="taxonomic scope" value="Bacteria"/>
</dbReference>
<dbReference type="HOGENOM" id="CLU_000445_0_6_5"/>
<dbReference type="OrthoDB" id="9802388at2"/>
<dbReference type="Proteomes" id="UP000000604">
    <property type="component" value="Chromosome"/>
</dbReference>
<dbReference type="GO" id="GO:0005524">
    <property type="term" value="F:ATP binding"/>
    <property type="evidence" value="ECO:0007669"/>
    <property type="project" value="UniProtKB-KW"/>
</dbReference>
<dbReference type="GO" id="GO:0016887">
    <property type="term" value="F:ATP hydrolysis activity"/>
    <property type="evidence" value="ECO:0007669"/>
    <property type="project" value="InterPro"/>
</dbReference>
<dbReference type="GO" id="GO:0043565">
    <property type="term" value="F:sequence-specific DNA binding"/>
    <property type="evidence" value="ECO:0007669"/>
    <property type="project" value="InterPro"/>
</dbReference>
<dbReference type="GO" id="GO:0000160">
    <property type="term" value="P:phosphorelay signal transduction system"/>
    <property type="evidence" value="ECO:0007669"/>
    <property type="project" value="UniProtKB-KW"/>
</dbReference>
<dbReference type="GO" id="GO:0006355">
    <property type="term" value="P:regulation of DNA-templated transcription"/>
    <property type="evidence" value="ECO:0007669"/>
    <property type="project" value="InterPro"/>
</dbReference>
<dbReference type="CDD" id="cd00009">
    <property type="entry name" value="AAA"/>
    <property type="match status" value="1"/>
</dbReference>
<dbReference type="CDD" id="cd17550">
    <property type="entry name" value="REC_NtrX-like"/>
    <property type="match status" value="1"/>
</dbReference>
<dbReference type="FunFam" id="3.40.50.2300:FF:000018">
    <property type="entry name" value="DNA-binding transcriptional regulator NtrC"/>
    <property type="match status" value="1"/>
</dbReference>
<dbReference type="Gene3D" id="1.10.8.60">
    <property type="match status" value="1"/>
</dbReference>
<dbReference type="Gene3D" id="3.40.50.2300">
    <property type="match status" value="1"/>
</dbReference>
<dbReference type="Gene3D" id="1.10.10.60">
    <property type="entry name" value="Homeodomain-like"/>
    <property type="match status" value="1"/>
</dbReference>
<dbReference type="Gene3D" id="3.40.50.300">
    <property type="entry name" value="P-loop containing nucleotide triphosphate hydrolases"/>
    <property type="match status" value="1"/>
</dbReference>
<dbReference type="InterPro" id="IPR003593">
    <property type="entry name" value="AAA+_ATPase"/>
</dbReference>
<dbReference type="InterPro" id="IPR011006">
    <property type="entry name" value="CheY-like_superfamily"/>
</dbReference>
<dbReference type="InterPro" id="IPR009057">
    <property type="entry name" value="Homeodomain-like_sf"/>
</dbReference>
<dbReference type="InterPro" id="IPR002197">
    <property type="entry name" value="HTH_Fis"/>
</dbReference>
<dbReference type="InterPro" id="IPR027417">
    <property type="entry name" value="P-loop_NTPase"/>
</dbReference>
<dbReference type="InterPro" id="IPR001789">
    <property type="entry name" value="Sig_transdc_resp-reg_receiver"/>
</dbReference>
<dbReference type="InterPro" id="IPR002078">
    <property type="entry name" value="Sigma_54_int"/>
</dbReference>
<dbReference type="InterPro" id="IPR025944">
    <property type="entry name" value="Sigma_54_int_dom_CS"/>
</dbReference>
<dbReference type="PANTHER" id="PTHR32071:SF17">
    <property type="entry name" value="TRANSCRIPTIONAL REGULATOR (NTRC FAMILY)"/>
    <property type="match status" value="1"/>
</dbReference>
<dbReference type="PANTHER" id="PTHR32071">
    <property type="entry name" value="TRANSCRIPTIONAL REGULATORY PROTEIN"/>
    <property type="match status" value="1"/>
</dbReference>
<dbReference type="Pfam" id="PF02954">
    <property type="entry name" value="HTH_8"/>
    <property type="match status" value="1"/>
</dbReference>
<dbReference type="Pfam" id="PF00072">
    <property type="entry name" value="Response_reg"/>
    <property type="match status" value="1"/>
</dbReference>
<dbReference type="Pfam" id="PF00158">
    <property type="entry name" value="Sigma54_activat"/>
    <property type="match status" value="1"/>
</dbReference>
<dbReference type="SMART" id="SM00382">
    <property type="entry name" value="AAA"/>
    <property type="match status" value="1"/>
</dbReference>
<dbReference type="SMART" id="SM00448">
    <property type="entry name" value="REC"/>
    <property type="match status" value="1"/>
</dbReference>
<dbReference type="SUPFAM" id="SSF52172">
    <property type="entry name" value="CheY-like"/>
    <property type="match status" value="1"/>
</dbReference>
<dbReference type="SUPFAM" id="SSF46689">
    <property type="entry name" value="Homeodomain-like"/>
    <property type="match status" value="1"/>
</dbReference>
<dbReference type="SUPFAM" id="SSF52540">
    <property type="entry name" value="P-loop containing nucleoside triphosphate hydrolases"/>
    <property type="match status" value="1"/>
</dbReference>
<dbReference type="PROSITE" id="PS50110">
    <property type="entry name" value="RESPONSE_REGULATORY"/>
    <property type="match status" value="1"/>
</dbReference>
<dbReference type="PROSITE" id="PS00688">
    <property type="entry name" value="SIGMA54_INTERACT_3"/>
    <property type="match status" value="1"/>
</dbReference>
<dbReference type="PROSITE" id="PS50045">
    <property type="entry name" value="SIGMA54_INTERACT_4"/>
    <property type="match status" value="1"/>
</dbReference>
<organism>
    <name type="scientific">Rickettsia typhi (strain ATCC VR-144 / Wilmington)</name>
    <dbReference type="NCBI Taxonomy" id="257363"/>
    <lineage>
        <taxon>Bacteria</taxon>
        <taxon>Pseudomonadati</taxon>
        <taxon>Pseudomonadota</taxon>
        <taxon>Alphaproteobacteria</taxon>
        <taxon>Rickettsiales</taxon>
        <taxon>Rickettsiaceae</taxon>
        <taxon>Rickettsieae</taxon>
        <taxon>Rickettsia</taxon>
        <taxon>typhus group</taxon>
    </lineage>
</organism>
<protein>
    <recommendedName>
        <fullName>Putative response regulator NtrX-like</fullName>
    </recommendedName>
</protein>
<accession>Q68WH4</accession>
<feature type="chain" id="PRO_0000282385" description="Putative response regulator NtrX-like">
    <location>
        <begin position="1"/>
        <end position="475"/>
    </location>
</feature>
<feature type="domain" description="Response regulatory" evidence="2">
    <location>
        <begin position="5"/>
        <end position="121"/>
    </location>
</feature>
<feature type="domain" description="Sigma-54 factor interaction" evidence="3">
    <location>
        <begin position="143"/>
        <end position="369"/>
    </location>
</feature>
<feature type="binding site" evidence="3">
    <location>
        <begin position="171"/>
        <end position="178"/>
    </location>
    <ligand>
        <name>ATP</name>
        <dbReference type="ChEBI" id="CHEBI:30616"/>
    </ligand>
</feature>
<feature type="binding site" evidence="3">
    <location>
        <begin position="232"/>
        <end position="241"/>
    </location>
    <ligand>
        <name>ATP</name>
        <dbReference type="ChEBI" id="CHEBI:30616"/>
    </ligand>
</feature>
<feature type="modified residue" description="4-aspartylphosphate" evidence="2">
    <location>
        <position position="54"/>
    </location>
</feature>